<protein>
    <recommendedName>
        <fullName evidence="1">Large ribosomal subunit protein bL12</fullName>
    </recommendedName>
    <alternativeName>
        <fullName evidence="2">50S ribosomal protein L7/L12</fullName>
    </alternativeName>
</protein>
<sequence>MANHEQIIEAIKEMSVLELNDLVKAIEEEFGVTAAAPVAVAGAAGGADAAAEKTEFDVELTSAGSSKIKVVKAVKEATGLGLKDAKELVDGAPKVIKEALPKEEAEKLKEQLEEVGATVELK</sequence>
<gene>
    <name evidence="1" type="primary">rplL</name>
    <name type="ordered locus">SAV0540</name>
</gene>
<accession>P66061</accession>
<accession>Q99W66</accession>
<keyword id="KW-0687">Ribonucleoprotein</keyword>
<keyword id="KW-0689">Ribosomal protein</keyword>
<comment type="function">
    <text evidence="1">Forms part of the ribosomal stalk which helps the ribosome interact with GTP-bound translation factors. Is thus essential for accurate translation.</text>
</comment>
<comment type="subunit">
    <text evidence="1">Homodimer. Part of the ribosomal stalk of the 50S ribosomal subunit. Forms a multimeric L10(L12)X complex, where L10 forms an elongated spine to which 2 to 4 L12 dimers bind in a sequential fashion. Binds GTP-bound translation factors.</text>
</comment>
<comment type="similarity">
    <text evidence="1">Belongs to the bacterial ribosomal protein bL12 family.</text>
</comment>
<reference key="1">
    <citation type="journal article" date="2001" name="Lancet">
        <title>Whole genome sequencing of meticillin-resistant Staphylococcus aureus.</title>
        <authorList>
            <person name="Kuroda M."/>
            <person name="Ohta T."/>
            <person name="Uchiyama I."/>
            <person name="Baba T."/>
            <person name="Yuzawa H."/>
            <person name="Kobayashi I."/>
            <person name="Cui L."/>
            <person name="Oguchi A."/>
            <person name="Aoki K."/>
            <person name="Nagai Y."/>
            <person name="Lian J.-Q."/>
            <person name="Ito T."/>
            <person name="Kanamori M."/>
            <person name="Matsumaru H."/>
            <person name="Maruyama A."/>
            <person name="Murakami H."/>
            <person name="Hosoyama A."/>
            <person name="Mizutani-Ui Y."/>
            <person name="Takahashi N.K."/>
            <person name="Sawano T."/>
            <person name="Inoue R."/>
            <person name="Kaito C."/>
            <person name="Sekimizu K."/>
            <person name="Hirakawa H."/>
            <person name="Kuhara S."/>
            <person name="Goto S."/>
            <person name="Yabuzaki J."/>
            <person name="Kanehisa M."/>
            <person name="Yamashita A."/>
            <person name="Oshima K."/>
            <person name="Furuya K."/>
            <person name="Yoshino C."/>
            <person name="Shiba T."/>
            <person name="Hattori M."/>
            <person name="Ogasawara N."/>
            <person name="Hayashi H."/>
            <person name="Hiramatsu K."/>
        </authorList>
    </citation>
    <scope>NUCLEOTIDE SEQUENCE [LARGE SCALE GENOMIC DNA]</scope>
    <source>
        <strain>Mu50 / ATCC 700699</strain>
    </source>
</reference>
<dbReference type="EMBL" id="BA000017">
    <property type="protein sequence ID" value="BAB56702.1"/>
    <property type="molecule type" value="Genomic_DNA"/>
</dbReference>
<dbReference type="RefSeq" id="WP_001273586.1">
    <property type="nucleotide sequence ID" value="NC_002758.2"/>
</dbReference>
<dbReference type="SMR" id="P66061"/>
<dbReference type="GeneID" id="98344874"/>
<dbReference type="KEGG" id="sav:SAV0540"/>
<dbReference type="HOGENOM" id="CLU_086499_3_2_9"/>
<dbReference type="PhylomeDB" id="P66061"/>
<dbReference type="Proteomes" id="UP000002481">
    <property type="component" value="Chromosome"/>
</dbReference>
<dbReference type="GO" id="GO:0022625">
    <property type="term" value="C:cytosolic large ribosomal subunit"/>
    <property type="evidence" value="ECO:0007669"/>
    <property type="project" value="TreeGrafter"/>
</dbReference>
<dbReference type="GO" id="GO:0003729">
    <property type="term" value="F:mRNA binding"/>
    <property type="evidence" value="ECO:0007669"/>
    <property type="project" value="TreeGrafter"/>
</dbReference>
<dbReference type="GO" id="GO:0003735">
    <property type="term" value="F:structural constituent of ribosome"/>
    <property type="evidence" value="ECO:0007669"/>
    <property type="project" value="InterPro"/>
</dbReference>
<dbReference type="GO" id="GO:0006412">
    <property type="term" value="P:translation"/>
    <property type="evidence" value="ECO:0007669"/>
    <property type="project" value="UniProtKB-UniRule"/>
</dbReference>
<dbReference type="CDD" id="cd00387">
    <property type="entry name" value="Ribosomal_L7_L12"/>
    <property type="match status" value="1"/>
</dbReference>
<dbReference type="FunFam" id="1.20.5.710:FF:000002">
    <property type="entry name" value="50S ribosomal protein L7/L12"/>
    <property type="match status" value="1"/>
</dbReference>
<dbReference type="FunFam" id="3.30.1390.10:FF:000001">
    <property type="entry name" value="50S ribosomal protein L7/L12"/>
    <property type="match status" value="1"/>
</dbReference>
<dbReference type="Gene3D" id="3.30.1390.10">
    <property type="match status" value="1"/>
</dbReference>
<dbReference type="Gene3D" id="1.20.5.710">
    <property type="entry name" value="Single helix bin"/>
    <property type="match status" value="1"/>
</dbReference>
<dbReference type="HAMAP" id="MF_00368">
    <property type="entry name" value="Ribosomal_bL12"/>
    <property type="match status" value="1"/>
</dbReference>
<dbReference type="InterPro" id="IPR000206">
    <property type="entry name" value="Ribosomal_bL12"/>
</dbReference>
<dbReference type="InterPro" id="IPR013823">
    <property type="entry name" value="Ribosomal_bL12_C"/>
</dbReference>
<dbReference type="InterPro" id="IPR014719">
    <property type="entry name" value="Ribosomal_bL12_C/ClpS-like"/>
</dbReference>
<dbReference type="InterPro" id="IPR008932">
    <property type="entry name" value="Ribosomal_bL12_oligo"/>
</dbReference>
<dbReference type="InterPro" id="IPR036235">
    <property type="entry name" value="Ribosomal_bL12_oligo_N_sf"/>
</dbReference>
<dbReference type="NCBIfam" id="TIGR00855">
    <property type="entry name" value="L12"/>
    <property type="match status" value="1"/>
</dbReference>
<dbReference type="PANTHER" id="PTHR45987">
    <property type="entry name" value="39S RIBOSOMAL PROTEIN L12"/>
    <property type="match status" value="1"/>
</dbReference>
<dbReference type="PANTHER" id="PTHR45987:SF4">
    <property type="entry name" value="LARGE RIBOSOMAL SUBUNIT PROTEIN BL12M"/>
    <property type="match status" value="1"/>
</dbReference>
<dbReference type="Pfam" id="PF00542">
    <property type="entry name" value="Ribosomal_L12"/>
    <property type="match status" value="1"/>
</dbReference>
<dbReference type="Pfam" id="PF16320">
    <property type="entry name" value="Ribosomal_L12_N"/>
    <property type="match status" value="1"/>
</dbReference>
<dbReference type="SUPFAM" id="SSF54736">
    <property type="entry name" value="ClpS-like"/>
    <property type="match status" value="1"/>
</dbReference>
<dbReference type="SUPFAM" id="SSF48300">
    <property type="entry name" value="Ribosomal protein L7/12, oligomerisation (N-terminal) domain"/>
    <property type="match status" value="1"/>
</dbReference>
<name>RL7_STAAM</name>
<evidence type="ECO:0000255" key="1">
    <source>
        <dbReference type="HAMAP-Rule" id="MF_00368"/>
    </source>
</evidence>
<evidence type="ECO:0000305" key="2"/>
<organism>
    <name type="scientific">Staphylococcus aureus (strain Mu50 / ATCC 700699)</name>
    <dbReference type="NCBI Taxonomy" id="158878"/>
    <lineage>
        <taxon>Bacteria</taxon>
        <taxon>Bacillati</taxon>
        <taxon>Bacillota</taxon>
        <taxon>Bacilli</taxon>
        <taxon>Bacillales</taxon>
        <taxon>Staphylococcaceae</taxon>
        <taxon>Staphylococcus</taxon>
    </lineage>
</organism>
<proteinExistence type="inferred from homology"/>
<feature type="chain" id="PRO_0000157575" description="Large ribosomal subunit protein bL12">
    <location>
        <begin position="1"/>
        <end position="122"/>
    </location>
</feature>